<keyword id="KW-0998">Cell outer membrane</keyword>
<keyword id="KW-0387">Ice nucleation</keyword>
<keyword id="KW-0472">Membrane</keyword>
<keyword id="KW-0677">Repeat</keyword>
<evidence type="ECO:0000256" key="1">
    <source>
        <dbReference type="SAM" id="MobiDB-lite"/>
    </source>
</evidence>
<evidence type="ECO:0000305" key="2"/>
<feature type="chain" id="PRO_0000204022" description="Ice nucleation protein InaU">
    <location>
        <begin position="1"/>
        <end position="1034"/>
    </location>
</feature>
<feature type="region of interest" description="Octapeptide periodicity">
    <location>
        <begin position="162"/>
        <end position="993"/>
    </location>
</feature>
<feature type="region of interest" description="Disordered" evidence="1">
    <location>
        <begin position="260"/>
        <end position="287"/>
    </location>
</feature>
<feature type="region of interest" description="Disordered" evidence="1">
    <location>
        <begin position="311"/>
        <end position="342"/>
    </location>
</feature>
<feature type="region of interest" description="Disordered" evidence="1">
    <location>
        <begin position="356"/>
        <end position="383"/>
    </location>
</feature>
<feature type="region of interest" description="Disordered" evidence="1">
    <location>
        <begin position="407"/>
        <end position="438"/>
    </location>
</feature>
<feature type="region of interest" description="Disordered" evidence="1">
    <location>
        <begin position="452"/>
        <end position="480"/>
    </location>
</feature>
<feature type="region of interest" description="Disordered" evidence="1">
    <location>
        <begin position="570"/>
        <end position="597"/>
    </location>
</feature>
<feature type="compositionally biased region" description="Polar residues" evidence="1">
    <location>
        <begin position="261"/>
        <end position="286"/>
    </location>
</feature>
<feature type="compositionally biased region" description="Polar residues" evidence="1">
    <location>
        <begin position="311"/>
        <end position="334"/>
    </location>
</feature>
<feature type="compositionally biased region" description="Polar residues" evidence="1">
    <location>
        <begin position="357"/>
        <end position="382"/>
    </location>
</feature>
<feature type="compositionally biased region" description="Polar residues" evidence="1">
    <location>
        <begin position="407"/>
        <end position="430"/>
    </location>
</feature>
<feature type="compositionally biased region" description="Polar residues" evidence="1">
    <location>
        <begin position="453"/>
        <end position="480"/>
    </location>
</feature>
<feature type="compositionally biased region" description="Polar residues" evidence="1">
    <location>
        <begin position="580"/>
        <end position="592"/>
    </location>
</feature>
<gene>
    <name type="primary">inaU</name>
</gene>
<proteinExistence type="inferred from homology"/>
<sequence length="1034" mass="103378">MKEDKVLILRTCANNMADHGGIIWPLSGIVECKYWKPVKGFENGLTGLIWGKGSDSPLSLHADARWVVAEVDADECIAIETHGWIKFPRAEVLHVGTKTSAMQFILHHRADYVACTEMQAGPGAPDVTSEVKAGNRSLPVTDDIDATIESGSTQPTQTIEIATYGSTLSGTHQSQLIAGYGSTETAGDSSTLIAGYGSTGTAGSDSTLVAGYGSTQTAGEESSQMAGYGSTQTGMKGSDLTAGYGSTGTAGDDSSLIAGYGSTQTAGEDSSLTAGYGSTQTAQKGSDLTAGYGSTGTAGADSSLIAGYGSTQTAGEESTQTAGYGSTQTAQKGSDLTAGYGSTGTAGDDSSLIAGYGSTQTAGEDSSLTAGYGSTQTAQKGSDLTAGYGSTGTAGADSSLIAGYGSTQTAGEESTQTAGYGSTQTAQKGSDLTAGYGSTGTAGDDSSLIAGYGSTQTAGEDSSLTAGYGSTQTAQKGSDLTAGYGSTSTAGYESSLIAGYGSTQTAGYGSTLTAGYGSTQTAQNESDLITGYGSTSTAGANSSLIAGYGSTQTASYNSVLTAGYGSTQTAREGSDLTAGYGSTQTAQENSDLTTGYGSTSTAGYDSSLIAGYGSTQTAGYHSILTAGYGSTQTAQERSDLTTGYGSTSTAGADSSLIAGYGSTQTAGYNSILTAGYGSTQTAQENSDLTTGYGSTSTAGYESSLIAGYGSTQTASFKSTLMAGYGSSQTAREQSSLTAGYGSTSMAGYDSSLIAGYGSTQTAGYQSTLTAGYGSTQTAEHSSTLTAGYGSTATAGADSSLIAGYGSSLTSGIRSFLTAGYGSTLISGLRSVLTAGYGSSLISGRRSSLTAGYGSNQIASHRSSLIAGPESTQITGNRSMLIAGKGSSQTAGYRSTLISGADSVQMAGERGKLIAGADSTQTAGDRSKLLAGNNSYLTAGDRSKLTAGNDCILMAGDRSKLTAGINSILTAGCRSKLIGSNGSTLTAGENSVLIFRCWDGKRYTNVVAKTGKGGIEADMPYQMDEDNNIVNKPEE</sequence>
<name>ICEN_PANAN</name>
<accession>Q47879</accession>
<dbReference type="EMBL" id="D14992">
    <property type="protein sequence ID" value="BAA03636.1"/>
    <property type="molecule type" value="Genomic_DNA"/>
</dbReference>
<dbReference type="PIR" id="JC2143">
    <property type="entry name" value="JC2143"/>
</dbReference>
<dbReference type="GO" id="GO:0009279">
    <property type="term" value="C:cell outer membrane"/>
    <property type="evidence" value="ECO:0007669"/>
    <property type="project" value="UniProtKB-SubCell"/>
</dbReference>
<dbReference type="GO" id="GO:0050825">
    <property type="term" value="F:ice binding"/>
    <property type="evidence" value="ECO:0007669"/>
    <property type="project" value="UniProtKB-KW"/>
</dbReference>
<dbReference type="InterPro" id="IPR000258">
    <property type="entry name" value="Ice_nucleatn"/>
</dbReference>
<dbReference type="PANTHER" id="PTHR31294">
    <property type="match status" value="1"/>
</dbReference>
<dbReference type="PANTHER" id="PTHR31294:SF8">
    <property type="entry name" value="KERATIN-ASSOCIATED PROTEIN 21-1-RELATED"/>
    <property type="match status" value="1"/>
</dbReference>
<dbReference type="Pfam" id="PF00818">
    <property type="entry name" value="Ice_nucleation"/>
    <property type="match status" value="30"/>
</dbReference>
<dbReference type="PRINTS" id="PR00327">
    <property type="entry name" value="ICENUCLEATN"/>
</dbReference>
<dbReference type="SUPFAM" id="SSF69349">
    <property type="entry name" value="Phage fibre proteins"/>
    <property type="match status" value="7"/>
</dbReference>
<dbReference type="PROSITE" id="PS00314">
    <property type="entry name" value="ICE_NUCLEATION"/>
    <property type="match status" value="34"/>
</dbReference>
<protein>
    <recommendedName>
        <fullName>Ice nucleation protein InaU</fullName>
    </recommendedName>
</protein>
<reference key="1">
    <citation type="journal article" date="1994" name="Biosci. Biotechnol. Biochem.">
        <title>Cloning and sequencing of an ice nucleation active gene of Erwinia uredovora.</title>
        <authorList>
            <person name="Michigami Y."/>
            <person name="Watabe S."/>
            <person name="Abe K."/>
            <person name="Obata H."/>
            <person name="Arai S."/>
        </authorList>
    </citation>
    <scope>NUCLEOTIDE SEQUENCE [GENOMIC DNA]</scope>
    <source>
        <strain>KUIN-3</strain>
    </source>
</reference>
<comment type="function">
    <text>Ice nucleation proteins enable bacteria to nucleate crystallization in supercooled water.</text>
</comment>
<comment type="subcellular location">
    <subcellularLocation>
        <location>Cell outer membrane</location>
    </subcellularLocation>
</comment>
<comment type="domain">
    <text>Contains imperfect repeats of a consensus octapeptide A-G-Y-G-S-T-X-T; further on a 16-residue and a regional 48-residue periodicity is superimposed.</text>
</comment>
<comment type="miscellaneous">
    <text>A structural model is suggested in which the ice nucleation protein displays a symmetry related to that of ice.</text>
</comment>
<comment type="similarity">
    <text evidence="2">Belongs to the bacterial ice nucleation protein family.</text>
</comment>
<organism>
    <name type="scientific">Pantoea ananas</name>
    <name type="common">Erwinia uredovora</name>
    <dbReference type="NCBI Taxonomy" id="553"/>
    <lineage>
        <taxon>Bacteria</taxon>
        <taxon>Pseudomonadati</taxon>
        <taxon>Pseudomonadota</taxon>
        <taxon>Gammaproteobacteria</taxon>
        <taxon>Enterobacterales</taxon>
        <taxon>Erwiniaceae</taxon>
        <taxon>Pantoea</taxon>
    </lineage>
</organism>